<name>ACS2_KLULA</name>
<gene>
    <name type="primary">ACS2</name>
    <name type="ordered locus">KLLA0D17336g</name>
</gene>
<feature type="chain" id="PRO_0000208415" description="Acetyl-coenzyme A synthetase 2">
    <location>
        <begin position="1"/>
        <end position="684"/>
    </location>
</feature>
<feature type="binding site" evidence="1">
    <location>
        <begin position="207"/>
        <end position="210"/>
    </location>
    <ligand>
        <name>CoA</name>
        <dbReference type="ChEBI" id="CHEBI:57287"/>
    </ligand>
</feature>
<feature type="binding site" evidence="1">
    <location>
        <position position="326"/>
    </location>
    <ligand>
        <name>CoA</name>
        <dbReference type="ChEBI" id="CHEBI:57287"/>
    </ligand>
</feature>
<feature type="binding site" evidence="1">
    <location>
        <begin position="402"/>
        <end position="404"/>
    </location>
    <ligand>
        <name>ATP</name>
        <dbReference type="ChEBI" id="CHEBI:30616"/>
    </ligand>
</feature>
<feature type="binding site" evidence="1">
    <location>
        <begin position="426"/>
        <end position="431"/>
    </location>
    <ligand>
        <name>ATP</name>
        <dbReference type="ChEBI" id="CHEBI:30616"/>
    </ligand>
</feature>
<feature type="binding site" evidence="1">
    <location>
        <position position="517"/>
    </location>
    <ligand>
        <name>ATP</name>
        <dbReference type="ChEBI" id="CHEBI:30616"/>
    </ligand>
</feature>
<feature type="binding site" evidence="1">
    <location>
        <position position="532"/>
    </location>
    <ligand>
        <name>ATP</name>
        <dbReference type="ChEBI" id="CHEBI:30616"/>
    </ligand>
</feature>
<feature type="binding site" evidence="1">
    <location>
        <position position="540"/>
    </location>
    <ligand>
        <name>CoA</name>
        <dbReference type="ChEBI" id="CHEBI:57287"/>
    </ligand>
</feature>
<feature type="binding site" evidence="1">
    <location>
        <position position="543"/>
    </location>
    <ligand>
        <name>ATP</name>
        <dbReference type="ChEBI" id="CHEBI:30616"/>
    </ligand>
</feature>
<feature type="binding site" evidence="1">
    <location>
        <position position="613"/>
    </location>
    <ligand>
        <name>CoA</name>
        <dbReference type="ChEBI" id="CHEBI:57287"/>
    </ligand>
</feature>
<feature type="sequence conflict" description="In Ref. 1; AAD30108." evidence="2" ref="1">
    <original>A</original>
    <variation>D</variation>
    <location>
        <position position="491"/>
    </location>
</feature>
<sequence length="684" mass="75105">MSSDKLHKVVHEAHDVEARHAPEHFYNSQPGKSYCTDEEHYREMYTQSIEDPAGFFGPLAKEYLDWDRPFTQVQSGSLEHGDIAWFLNGELNASYNCVDRHAFANPDKPALIYEADDESENKVITFGELLRQVSEVAGVLQSWGVKKGDTVAVYLPMIPAAVVAMLAVARLGAIHSVIFAGFSAGSLKERVVDAGCKVVITCDEGKRGGKTVHTKKIVDEGLAGVDSVSKILVFQRTGTQGIPMKPARDFWWHEECVKQRGYLPPVPVNSEDPLFLLYTSGSTGSPKGVVHSTAGYLLGSALTTRFVFDIHPEDVLFTAGDVGWITGHTYALYGPLTLGTATIIFESTPAYPDYGRYWRIIERHRATHFYVAPTALRLIKRVGEEEIAKYDTSSLRVLGSVGEPISPDLWEWYHEKVGKNNCVICDTMWQTESGSHLIAPLAGAVPTKPGSATVPFFGINACIIDPVSGEELKGNDVEGVLAVKSPWPSMARSVWNNHARYFETYLKPYPGYYFTGDGAGRDHDGYYWIRGRVDDVVNVSGHRLSTAEIEAALAEHEGVSEAAVVGITDELTGQAVIAFVSLKDGYLSENAVEGDSTHISPDNLRRELILQVRGEIGPFAAPKTVVVVNDLPKTRSGKIMRRVLRKVASKEADQLGDLSTLANADVVPSIISAVENQFFSQQKK</sequence>
<organism>
    <name type="scientific">Kluyveromyces lactis (strain ATCC 8585 / CBS 2359 / DSM 70799 / NBRC 1267 / NRRL Y-1140 / WM37)</name>
    <name type="common">Yeast</name>
    <name type="synonym">Candida sphaerica</name>
    <dbReference type="NCBI Taxonomy" id="284590"/>
    <lineage>
        <taxon>Eukaryota</taxon>
        <taxon>Fungi</taxon>
        <taxon>Dikarya</taxon>
        <taxon>Ascomycota</taxon>
        <taxon>Saccharomycotina</taxon>
        <taxon>Saccharomycetes</taxon>
        <taxon>Saccharomycetales</taxon>
        <taxon>Saccharomycetaceae</taxon>
        <taxon>Kluyveromyces</taxon>
    </lineage>
</organism>
<protein>
    <recommendedName>
        <fullName>Acetyl-coenzyme A synthetase 2</fullName>
        <ecNumber>6.2.1.1</ecNumber>
    </recommendedName>
    <alternativeName>
        <fullName>Acetate--CoA ligase 2</fullName>
    </alternativeName>
    <alternativeName>
        <fullName>Acyl-activating enzyme 2</fullName>
    </alternativeName>
</protein>
<reference key="1">
    <citation type="journal article" date="2003" name="Yeast">
        <title>The acetyl co-enzyme A synthetase genes of Kluyveromyces lactis.</title>
        <authorList>
            <person name="Zeeman A.-M."/>
            <person name="Steensma H.Y."/>
        </authorList>
    </citation>
    <scope>NUCLEOTIDE SEQUENCE [GENOMIC DNA]</scope>
    <source>
        <strain>ATCC MYA-539 / JBD100</strain>
    </source>
</reference>
<reference key="2">
    <citation type="journal article" date="2004" name="Nature">
        <title>Genome evolution in yeasts.</title>
        <authorList>
            <person name="Dujon B."/>
            <person name="Sherman D."/>
            <person name="Fischer G."/>
            <person name="Durrens P."/>
            <person name="Casaregola S."/>
            <person name="Lafontaine I."/>
            <person name="de Montigny J."/>
            <person name="Marck C."/>
            <person name="Neuveglise C."/>
            <person name="Talla E."/>
            <person name="Goffard N."/>
            <person name="Frangeul L."/>
            <person name="Aigle M."/>
            <person name="Anthouard V."/>
            <person name="Babour A."/>
            <person name="Barbe V."/>
            <person name="Barnay S."/>
            <person name="Blanchin S."/>
            <person name="Beckerich J.-M."/>
            <person name="Beyne E."/>
            <person name="Bleykasten C."/>
            <person name="Boisrame A."/>
            <person name="Boyer J."/>
            <person name="Cattolico L."/>
            <person name="Confanioleri F."/>
            <person name="de Daruvar A."/>
            <person name="Despons L."/>
            <person name="Fabre E."/>
            <person name="Fairhead C."/>
            <person name="Ferry-Dumazet H."/>
            <person name="Groppi A."/>
            <person name="Hantraye F."/>
            <person name="Hennequin C."/>
            <person name="Jauniaux N."/>
            <person name="Joyet P."/>
            <person name="Kachouri R."/>
            <person name="Kerrest A."/>
            <person name="Koszul R."/>
            <person name="Lemaire M."/>
            <person name="Lesur I."/>
            <person name="Ma L."/>
            <person name="Muller H."/>
            <person name="Nicaud J.-M."/>
            <person name="Nikolski M."/>
            <person name="Oztas S."/>
            <person name="Ozier-Kalogeropoulos O."/>
            <person name="Pellenz S."/>
            <person name="Potier S."/>
            <person name="Richard G.-F."/>
            <person name="Straub M.-L."/>
            <person name="Suleau A."/>
            <person name="Swennen D."/>
            <person name="Tekaia F."/>
            <person name="Wesolowski-Louvel M."/>
            <person name="Westhof E."/>
            <person name="Wirth B."/>
            <person name="Zeniou-Meyer M."/>
            <person name="Zivanovic Y."/>
            <person name="Bolotin-Fukuhara M."/>
            <person name="Thierry A."/>
            <person name="Bouchier C."/>
            <person name="Caudron B."/>
            <person name="Scarpelli C."/>
            <person name="Gaillardin C."/>
            <person name="Weissenbach J."/>
            <person name="Wincker P."/>
            <person name="Souciet J.-L."/>
        </authorList>
    </citation>
    <scope>NUCLEOTIDE SEQUENCE [LARGE SCALE GENOMIC DNA]</scope>
    <source>
        <strain>ATCC 8585 / CBS 2359 / DSM 70799 / NBRC 1267 / NRRL Y-1140 / WM37</strain>
    </source>
</reference>
<dbReference type="EC" id="6.2.1.1"/>
<dbReference type="EMBL" id="AF134491">
    <property type="protein sequence ID" value="AAD30108.1"/>
    <property type="molecule type" value="Genomic_DNA"/>
</dbReference>
<dbReference type="EMBL" id="CR382124">
    <property type="protein sequence ID" value="CAH00923.1"/>
    <property type="molecule type" value="Genomic_DNA"/>
</dbReference>
<dbReference type="RefSeq" id="XP_453827.1">
    <property type="nucleotide sequence ID" value="XM_453827.1"/>
</dbReference>
<dbReference type="SMR" id="Q9Y7B5"/>
<dbReference type="FunCoup" id="Q9Y7B5">
    <property type="interactions" value="786"/>
</dbReference>
<dbReference type="STRING" id="284590.Q9Y7B5"/>
<dbReference type="PaxDb" id="284590-Q9Y7B5"/>
<dbReference type="KEGG" id="kla:KLLA0_D17336g"/>
<dbReference type="eggNOG" id="KOG1175">
    <property type="taxonomic scope" value="Eukaryota"/>
</dbReference>
<dbReference type="HOGENOM" id="CLU_000022_3_6_1"/>
<dbReference type="InParanoid" id="Q9Y7B5"/>
<dbReference type="OMA" id="TVHTKKI"/>
<dbReference type="Proteomes" id="UP000000598">
    <property type="component" value="Chromosome D"/>
</dbReference>
<dbReference type="GO" id="GO:0005829">
    <property type="term" value="C:cytosol"/>
    <property type="evidence" value="ECO:0007669"/>
    <property type="project" value="TreeGrafter"/>
</dbReference>
<dbReference type="GO" id="GO:0003987">
    <property type="term" value="F:acetate-CoA ligase activity"/>
    <property type="evidence" value="ECO:0007669"/>
    <property type="project" value="UniProtKB-EC"/>
</dbReference>
<dbReference type="GO" id="GO:0016208">
    <property type="term" value="F:AMP binding"/>
    <property type="evidence" value="ECO:0007669"/>
    <property type="project" value="InterPro"/>
</dbReference>
<dbReference type="GO" id="GO:0005524">
    <property type="term" value="F:ATP binding"/>
    <property type="evidence" value="ECO:0007669"/>
    <property type="project" value="UniProtKB-KW"/>
</dbReference>
<dbReference type="GO" id="GO:0019427">
    <property type="term" value="P:acetyl-CoA biosynthetic process from acetate"/>
    <property type="evidence" value="ECO:0007669"/>
    <property type="project" value="InterPro"/>
</dbReference>
<dbReference type="CDD" id="cd05966">
    <property type="entry name" value="ACS"/>
    <property type="match status" value="1"/>
</dbReference>
<dbReference type="FunFam" id="3.40.50.12780:FF:000001">
    <property type="entry name" value="Acetyl-coenzyme A synthetase"/>
    <property type="match status" value="1"/>
</dbReference>
<dbReference type="Gene3D" id="3.30.300.30">
    <property type="match status" value="1"/>
</dbReference>
<dbReference type="Gene3D" id="3.40.50.12780">
    <property type="entry name" value="N-terminal domain of ligase-like"/>
    <property type="match status" value="1"/>
</dbReference>
<dbReference type="InterPro" id="IPR011904">
    <property type="entry name" value="Ac_CoA_lig"/>
</dbReference>
<dbReference type="InterPro" id="IPR032387">
    <property type="entry name" value="ACAS_N"/>
</dbReference>
<dbReference type="InterPro" id="IPR025110">
    <property type="entry name" value="AMP-bd_C"/>
</dbReference>
<dbReference type="InterPro" id="IPR045851">
    <property type="entry name" value="AMP-bd_C_sf"/>
</dbReference>
<dbReference type="InterPro" id="IPR020845">
    <property type="entry name" value="AMP-binding_CS"/>
</dbReference>
<dbReference type="InterPro" id="IPR000873">
    <property type="entry name" value="AMP-dep_synth/lig_dom"/>
</dbReference>
<dbReference type="InterPro" id="IPR042099">
    <property type="entry name" value="ANL_N_sf"/>
</dbReference>
<dbReference type="NCBIfam" id="TIGR02188">
    <property type="entry name" value="Ac_CoA_lig_AcsA"/>
    <property type="match status" value="1"/>
</dbReference>
<dbReference type="NCBIfam" id="NF001208">
    <property type="entry name" value="PRK00174.1"/>
    <property type="match status" value="1"/>
</dbReference>
<dbReference type="PANTHER" id="PTHR24095">
    <property type="entry name" value="ACETYL-COENZYME A SYNTHETASE"/>
    <property type="match status" value="1"/>
</dbReference>
<dbReference type="PANTHER" id="PTHR24095:SF245">
    <property type="entry name" value="ACETYL-COENZYME A SYNTHETASE 2"/>
    <property type="match status" value="1"/>
</dbReference>
<dbReference type="Pfam" id="PF16177">
    <property type="entry name" value="ACAS_N"/>
    <property type="match status" value="1"/>
</dbReference>
<dbReference type="Pfam" id="PF00501">
    <property type="entry name" value="AMP-binding"/>
    <property type="match status" value="1"/>
</dbReference>
<dbReference type="Pfam" id="PF13193">
    <property type="entry name" value="AMP-binding_C"/>
    <property type="match status" value="1"/>
</dbReference>
<dbReference type="SUPFAM" id="SSF56801">
    <property type="entry name" value="Acetyl-CoA synthetase-like"/>
    <property type="match status" value="1"/>
</dbReference>
<dbReference type="PROSITE" id="PS00455">
    <property type="entry name" value="AMP_BINDING"/>
    <property type="match status" value="1"/>
</dbReference>
<keyword id="KW-0067">ATP-binding</keyword>
<keyword id="KW-0436">Ligase</keyword>
<keyword id="KW-0547">Nucleotide-binding</keyword>
<keyword id="KW-1185">Reference proteome</keyword>
<comment type="catalytic activity">
    <reaction>
        <text>acetate + ATP + CoA = acetyl-CoA + AMP + diphosphate</text>
        <dbReference type="Rhea" id="RHEA:23176"/>
        <dbReference type="ChEBI" id="CHEBI:30089"/>
        <dbReference type="ChEBI" id="CHEBI:30616"/>
        <dbReference type="ChEBI" id="CHEBI:33019"/>
        <dbReference type="ChEBI" id="CHEBI:57287"/>
        <dbReference type="ChEBI" id="CHEBI:57288"/>
        <dbReference type="ChEBI" id="CHEBI:456215"/>
        <dbReference type="EC" id="6.2.1.1"/>
    </reaction>
</comment>
<comment type="similarity">
    <text evidence="2">Belongs to the ATP-dependent AMP-binding enzyme family.</text>
</comment>
<accession>Q9Y7B5</accession>
<accession>Q6CQG2</accession>
<proteinExistence type="inferred from homology"/>
<evidence type="ECO:0000250" key="1"/>
<evidence type="ECO:0000305" key="2"/>